<comment type="function">
    <text evidence="1">Involved in the gluconeogenesis. Catalyzes the conversion of oxaloacetate (OAA) to phosphoenolpyruvate (PEP) through direct phosphoryl transfer between the nucleoside triphosphate and OAA.</text>
</comment>
<comment type="catalytic activity">
    <reaction evidence="1">
        <text>oxaloacetate + ATP = phosphoenolpyruvate + ADP + CO2</text>
        <dbReference type="Rhea" id="RHEA:18617"/>
        <dbReference type="ChEBI" id="CHEBI:16452"/>
        <dbReference type="ChEBI" id="CHEBI:16526"/>
        <dbReference type="ChEBI" id="CHEBI:30616"/>
        <dbReference type="ChEBI" id="CHEBI:58702"/>
        <dbReference type="ChEBI" id="CHEBI:456216"/>
        <dbReference type="EC" id="4.1.1.49"/>
    </reaction>
</comment>
<comment type="cofactor">
    <cofactor evidence="1">
        <name>Mn(2+)</name>
        <dbReference type="ChEBI" id="CHEBI:29035"/>
    </cofactor>
    <text evidence="1">Binds 1 Mn(2+) ion per subunit.</text>
</comment>
<comment type="pathway">
    <text evidence="1">Carbohydrate biosynthesis; gluconeogenesis.</text>
</comment>
<comment type="subcellular location">
    <subcellularLocation>
        <location evidence="1">Cytoplasm</location>
    </subcellularLocation>
</comment>
<comment type="similarity">
    <text evidence="1">Belongs to the phosphoenolpyruvate carboxykinase (ATP) family.</text>
</comment>
<dbReference type="EC" id="4.1.1.49" evidence="1"/>
<dbReference type="EMBL" id="AE014291">
    <property type="protein sequence ID" value="AAN30979.1"/>
    <property type="molecule type" value="Genomic_DNA"/>
</dbReference>
<dbReference type="EMBL" id="CP002997">
    <property type="protein sequence ID" value="AEM19396.1"/>
    <property type="molecule type" value="Genomic_DNA"/>
</dbReference>
<dbReference type="RefSeq" id="WP_004687762.1">
    <property type="nucleotide sequence ID" value="NZ_KN046804.1"/>
</dbReference>
<dbReference type="SMR" id="Q8FY05"/>
<dbReference type="KEGG" id="bms:BR2089"/>
<dbReference type="KEGG" id="bsi:BS1330_I2083"/>
<dbReference type="PATRIC" id="fig|204722.22.peg.1925"/>
<dbReference type="HOGENOM" id="CLU_018247_0_1_5"/>
<dbReference type="PhylomeDB" id="Q8FY05"/>
<dbReference type="UniPathway" id="UPA00138"/>
<dbReference type="Proteomes" id="UP000007104">
    <property type="component" value="Chromosome I"/>
</dbReference>
<dbReference type="GO" id="GO:0005829">
    <property type="term" value="C:cytosol"/>
    <property type="evidence" value="ECO:0007669"/>
    <property type="project" value="TreeGrafter"/>
</dbReference>
<dbReference type="GO" id="GO:0005524">
    <property type="term" value="F:ATP binding"/>
    <property type="evidence" value="ECO:0007669"/>
    <property type="project" value="UniProtKB-UniRule"/>
</dbReference>
<dbReference type="GO" id="GO:0046872">
    <property type="term" value="F:metal ion binding"/>
    <property type="evidence" value="ECO:0007669"/>
    <property type="project" value="UniProtKB-KW"/>
</dbReference>
<dbReference type="GO" id="GO:0004612">
    <property type="term" value="F:phosphoenolpyruvate carboxykinase (ATP) activity"/>
    <property type="evidence" value="ECO:0007669"/>
    <property type="project" value="UniProtKB-UniRule"/>
</dbReference>
<dbReference type="GO" id="GO:0006094">
    <property type="term" value="P:gluconeogenesis"/>
    <property type="evidence" value="ECO:0007669"/>
    <property type="project" value="UniProtKB-UniRule"/>
</dbReference>
<dbReference type="CDD" id="cd00484">
    <property type="entry name" value="PEPCK_ATP"/>
    <property type="match status" value="1"/>
</dbReference>
<dbReference type="Gene3D" id="3.90.228.20">
    <property type="match status" value="1"/>
</dbReference>
<dbReference type="Gene3D" id="3.40.449.10">
    <property type="entry name" value="Phosphoenolpyruvate Carboxykinase, domain 1"/>
    <property type="match status" value="1"/>
</dbReference>
<dbReference type="Gene3D" id="2.170.8.10">
    <property type="entry name" value="Phosphoenolpyruvate Carboxykinase, domain 2"/>
    <property type="match status" value="1"/>
</dbReference>
<dbReference type="HAMAP" id="MF_00453">
    <property type="entry name" value="PEPCK_ATP"/>
    <property type="match status" value="1"/>
</dbReference>
<dbReference type="InterPro" id="IPR001272">
    <property type="entry name" value="PEP_carboxykinase_ATP"/>
</dbReference>
<dbReference type="InterPro" id="IPR013035">
    <property type="entry name" value="PEP_carboxykinase_C"/>
</dbReference>
<dbReference type="InterPro" id="IPR008210">
    <property type="entry name" value="PEP_carboxykinase_N"/>
</dbReference>
<dbReference type="InterPro" id="IPR015994">
    <property type="entry name" value="PEPCK_ATP_CS"/>
</dbReference>
<dbReference type="NCBIfam" id="TIGR00224">
    <property type="entry name" value="pckA"/>
    <property type="match status" value="1"/>
</dbReference>
<dbReference type="NCBIfam" id="NF006820">
    <property type="entry name" value="PRK09344.1-2"/>
    <property type="match status" value="1"/>
</dbReference>
<dbReference type="NCBIfam" id="NF006821">
    <property type="entry name" value="PRK09344.1-3"/>
    <property type="match status" value="1"/>
</dbReference>
<dbReference type="NCBIfam" id="NF006822">
    <property type="entry name" value="PRK09344.1-4"/>
    <property type="match status" value="1"/>
</dbReference>
<dbReference type="PANTHER" id="PTHR30031:SF0">
    <property type="entry name" value="PHOSPHOENOLPYRUVATE CARBOXYKINASE (ATP)"/>
    <property type="match status" value="1"/>
</dbReference>
<dbReference type="PANTHER" id="PTHR30031">
    <property type="entry name" value="PHOSPHOENOLPYRUVATE CARBOXYKINASE ATP"/>
    <property type="match status" value="1"/>
</dbReference>
<dbReference type="Pfam" id="PF01293">
    <property type="entry name" value="PEPCK_ATP"/>
    <property type="match status" value="1"/>
</dbReference>
<dbReference type="PIRSF" id="PIRSF006294">
    <property type="entry name" value="PEP_crbxkin"/>
    <property type="match status" value="1"/>
</dbReference>
<dbReference type="SUPFAM" id="SSF68923">
    <property type="entry name" value="PEP carboxykinase N-terminal domain"/>
    <property type="match status" value="1"/>
</dbReference>
<dbReference type="SUPFAM" id="SSF53795">
    <property type="entry name" value="PEP carboxykinase-like"/>
    <property type="match status" value="1"/>
</dbReference>
<dbReference type="PROSITE" id="PS00532">
    <property type="entry name" value="PEPCK_ATP"/>
    <property type="match status" value="1"/>
</dbReference>
<proteinExistence type="inferred from homology"/>
<protein>
    <recommendedName>
        <fullName evidence="1">Phosphoenolpyruvate carboxykinase (ATP)</fullName>
        <shortName evidence="1">PCK</shortName>
        <shortName evidence="1">PEP carboxykinase</shortName>
        <shortName evidence="1">PEPCK</shortName>
        <ecNumber evidence="1">4.1.1.49</ecNumber>
    </recommendedName>
</protein>
<organism>
    <name type="scientific">Brucella suis biovar 1 (strain 1330)</name>
    <dbReference type="NCBI Taxonomy" id="204722"/>
    <lineage>
        <taxon>Bacteria</taxon>
        <taxon>Pseudomonadati</taxon>
        <taxon>Pseudomonadota</taxon>
        <taxon>Alphaproteobacteria</taxon>
        <taxon>Hyphomicrobiales</taxon>
        <taxon>Brucellaceae</taxon>
        <taxon>Brucella/Ochrobactrum group</taxon>
        <taxon>Brucella</taxon>
    </lineage>
</organism>
<name>PCKA_BRUSU</name>
<feature type="chain" id="PRO_0000203814" description="Phosphoenolpyruvate carboxykinase (ATP)">
    <location>
        <begin position="1"/>
        <end position="536"/>
    </location>
</feature>
<feature type="binding site" evidence="1">
    <location>
        <position position="61"/>
    </location>
    <ligand>
        <name>substrate</name>
    </ligand>
</feature>
<feature type="binding site" evidence="1">
    <location>
        <position position="195"/>
    </location>
    <ligand>
        <name>substrate</name>
    </ligand>
</feature>
<feature type="binding site" evidence="1">
    <location>
        <position position="201"/>
    </location>
    <ligand>
        <name>ATP</name>
        <dbReference type="ChEBI" id="CHEBI:30616"/>
    </ligand>
</feature>
<feature type="binding site" evidence="1">
    <location>
        <position position="201"/>
    </location>
    <ligand>
        <name>Mn(2+)</name>
        <dbReference type="ChEBI" id="CHEBI:29035"/>
    </ligand>
</feature>
<feature type="binding site" evidence="1">
    <location>
        <position position="201"/>
    </location>
    <ligand>
        <name>substrate</name>
    </ligand>
</feature>
<feature type="binding site" evidence="1">
    <location>
        <position position="220"/>
    </location>
    <ligand>
        <name>ATP</name>
        <dbReference type="ChEBI" id="CHEBI:30616"/>
    </ligand>
</feature>
<feature type="binding site" evidence="1">
    <location>
        <position position="220"/>
    </location>
    <ligand>
        <name>Mn(2+)</name>
        <dbReference type="ChEBI" id="CHEBI:29035"/>
    </ligand>
</feature>
<feature type="binding site" evidence="1">
    <location>
        <begin position="236"/>
        <end position="244"/>
    </location>
    <ligand>
        <name>ATP</name>
        <dbReference type="ChEBI" id="CHEBI:30616"/>
    </ligand>
</feature>
<feature type="binding site" evidence="1">
    <location>
        <position position="257"/>
    </location>
    <ligand>
        <name>Mn(2+)</name>
        <dbReference type="ChEBI" id="CHEBI:29035"/>
    </ligand>
</feature>
<feature type="binding site" evidence="1">
    <location>
        <position position="285"/>
    </location>
    <ligand>
        <name>ATP</name>
        <dbReference type="ChEBI" id="CHEBI:30616"/>
    </ligand>
</feature>
<feature type="binding site" evidence="1">
    <location>
        <position position="322"/>
    </location>
    <ligand>
        <name>ATP</name>
        <dbReference type="ChEBI" id="CHEBI:30616"/>
    </ligand>
</feature>
<feature type="binding site" evidence="1">
    <location>
        <position position="322"/>
    </location>
    <ligand>
        <name>substrate</name>
    </ligand>
</feature>
<feature type="binding site" evidence="1">
    <location>
        <position position="447"/>
    </location>
    <ligand>
        <name>ATP</name>
        <dbReference type="ChEBI" id="CHEBI:30616"/>
    </ligand>
</feature>
<sequence length="536" mass="58584">MKETGIHNKAASISTSGLKELSAVFYNLGPARLYEETIRRGEAELSAQGALVARTGQHTGRSPKDKFVVRDANTEDHVWWDNNKPMTPEAFELLYADFIEHAKGRELFVQDLIGGADADNKINARVITEYAWHSLFIRNLLIRPSQEALASYVPEMTIIDLPSFKADPERYGVRTETVIAVDLTRKIVLIGGTSYAGEMKKSVFTALNYILPAKGVMPMHCSANEGPNGDTAVFFGLSGTGKTTLSADPTRTLIGDDEHGWGEHGVFNFEGGCYAKTIRLSAEAEPEIYATTQRFGTVLENVVLDENRQPDFDDGSLTENTRCAYPLDFIPNASKSGKGGQPKNIIMLTADAFGVMPPIAKLTPAQAMYHFLSGYTAKVAGTEKGVTEPEATFSTCFGAPFMPRHPSEYGNLLRKLIAEHKVDCWLVNTGWTGGAYGVGKRMPIKATRALLAAALDGSLNNAEFRIDPNFGFAVPVEVPGVESSILDPRSTWADKVAYDAQAKKLVDMFVSNFEKFESHVDHEVKDAAPAIRMAAE</sequence>
<reference key="1">
    <citation type="journal article" date="2002" name="Proc. Natl. Acad. Sci. U.S.A.">
        <title>The Brucella suis genome reveals fundamental similarities between animal and plant pathogens and symbionts.</title>
        <authorList>
            <person name="Paulsen I.T."/>
            <person name="Seshadri R."/>
            <person name="Nelson K.E."/>
            <person name="Eisen J.A."/>
            <person name="Heidelberg J.F."/>
            <person name="Read T.D."/>
            <person name="Dodson R.J."/>
            <person name="Umayam L.A."/>
            <person name="Brinkac L.M."/>
            <person name="Beanan M.J."/>
            <person name="Daugherty S.C."/>
            <person name="DeBoy R.T."/>
            <person name="Durkin A.S."/>
            <person name="Kolonay J.F."/>
            <person name="Madupu R."/>
            <person name="Nelson W.C."/>
            <person name="Ayodeji B."/>
            <person name="Kraul M."/>
            <person name="Shetty J."/>
            <person name="Malek J.A."/>
            <person name="Van Aken S.E."/>
            <person name="Riedmuller S."/>
            <person name="Tettelin H."/>
            <person name="Gill S.R."/>
            <person name="White O."/>
            <person name="Salzberg S.L."/>
            <person name="Hoover D.L."/>
            <person name="Lindler L.E."/>
            <person name="Halling S.M."/>
            <person name="Boyle S.M."/>
            <person name="Fraser C.M."/>
        </authorList>
    </citation>
    <scope>NUCLEOTIDE SEQUENCE [LARGE SCALE GENOMIC DNA]</scope>
    <source>
        <strain>1330</strain>
    </source>
</reference>
<reference key="2">
    <citation type="journal article" date="2011" name="J. Bacteriol.">
        <title>Revised genome sequence of Brucella suis 1330.</title>
        <authorList>
            <person name="Tae H."/>
            <person name="Shallom S."/>
            <person name="Settlage R."/>
            <person name="Preston D."/>
            <person name="Adams L.G."/>
            <person name="Garner H.R."/>
        </authorList>
    </citation>
    <scope>NUCLEOTIDE SEQUENCE [LARGE SCALE GENOMIC DNA]</scope>
    <source>
        <strain>1330</strain>
    </source>
</reference>
<keyword id="KW-0067">ATP-binding</keyword>
<keyword id="KW-0963">Cytoplasm</keyword>
<keyword id="KW-0210">Decarboxylase</keyword>
<keyword id="KW-0312">Gluconeogenesis</keyword>
<keyword id="KW-0456">Lyase</keyword>
<keyword id="KW-0464">Manganese</keyword>
<keyword id="KW-0479">Metal-binding</keyword>
<keyword id="KW-0547">Nucleotide-binding</keyword>
<accession>Q8FY05</accession>
<accession>G0K937</accession>
<gene>
    <name evidence="1" type="primary">pckA</name>
    <name type="ordered locus">BR2089</name>
    <name type="ordered locus">BS1330_I2083</name>
</gene>
<evidence type="ECO:0000255" key="1">
    <source>
        <dbReference type="HAMAP-Rule" id="MF_00453"/>
    </source>
</evidence>